<dbReference type="EMBL" id="AE016817">
    <property type="protein sequence ID" value="AAS52266.1"/>
    <property type="molecule type" value="Genomic_DNA"/>
</dbReference>
<dbReference type="RefSeq" id="NP_984442.1">
    <property type="nucleotide sequence ID" value="NM_209795.1"/>
</dbReference>
<dbReference type="SMR" id="Q759D1"/>
<dbReference type="FunCoup" id="Q759D1">
    <property type="interactions" value="1077"/>
</dbReference>
<dbReference type="STRING" id="284811.Q759D1"/>
<dbReference type="EnsemblFungi" id="AAS52266">
    <property type="protein sequence ID" value="AAS52266"/>
    <property type="gene ID" value="AGOS_ADR346W"/>
</dbReference>
<dbReference type="GeneID" id="4620607"/>
<dbReference type="KEGG" id="ago:AGOS_ADR346W"/>
<dbReference type="eggNOG" id="KOG1723">
    <property type="taxonomic scope" value="Eukaryota"/>
</dbReference>
<dbReference type="HOGENOM" id="CLU_089419_1_1_1"/>
<dbReference type="InParanoid" id="Q759D1"/>
<dbReference type="OMA" id="NAGKEMT"/>
<dbReference type="OrthoDB" id="10262490at2759"/>
<dbReference type="Proteomes" id="UP000000591">
    <property type="component" value="Chromosome IV"/>
</dbReference>
<dbReference type="GO" id="GO:0005737">
    <property type="term" value="C:cytoplasm"/>
    <property type="evidence" value="ECO:0007669"/>
    <property type="project" value="UniProtKB-SubCell"/>
</dbReference>
<dbReference type="GO" id="GO:0005730">
    <property type="term" value="C:nucleolus"/>
    <property type="evidence" value="ECO:0000318"/>
    <property type="project" value="GO_Central"/>
</dbReference>
<dbReference type="GO" id="GO:0030687">
    <property type="term" value="C:preribosome, large subunit precursor"/>
    <property type="evidence" value="ECO:0007669"/>
    <property type="project" value="EnsemblFungi"/>
</dbReference>
<dbReference type="GO" id="GO:0001671">
    <property type="term" value="F:ATPase activator activity"/>
    <property type="evidence" value="ECO:0007669"/>
    <property type="project" value="EnsemblFungi"/>
</dbReference>
<dbReference type="GO" id="GO:0051117">
    <property type="term" value="F:ATPase binding"/>
    <property type="evidence" value="ECO:0007669"/>
    <property type="project" value="EnsemblFungi"/>
</dbReference>
<dbReference type="GO" id="GO:0003735">
    <property type="term" value="F:structural constituent of ribosome"/>
    <property type="evidence" value="ECO:0007669"/>
    <property type="project" value="InterPro"/>
</dbReference>
<dbReference type="GO" id="GO:1902626">
    <property type="term" value="P:assembly of large subunit precursor of preribosome"/>
    <property type="evidence" value="ECO:0007669"/>
    <property type="project" value="EnsemblFungi"/>
</dbReference>
<dbReference type="GO" id="GO:0042273">
    <property type="term" value="P:ribosomal large subunit biogenesis"/>
    <property type="evidence" value="ECO:0000318"/>
    <property type="project" value="GO_Central"/>
</dbReference>
<dbReference type="CDD" id="cd00472">
    <property type="entry name" value="Ribosomal_L24e_L24"/>
    <property type="match status" value="1"/>
</dbReference>
<dbReference type="FunFam" id="2.30.170.20:FF:000001">
    <property type="entry name" value="probable ribosome biogenesis protein RLP24"/>
    <property type="match status" value="1"/>
</dbReference>
<dbReference type="Gene3D" id="2.30.170.20">
    <property type="entry name" value="Ribosomal protein L24e"/>
    <property type="match status" value="1"/>
</dbReference>
<dbReference type="InterPro" id="IPR038630">
    <property type="entry name" value="L24e/L24_sf"/>
</dbReference>
<dbReference type="InterPro" id="IPR056366">
    <property type="entry name" value="Ribosomal_eL24"/>
</dbReference>
<dbReference type="InterPro" id="IPR000988">
    <property type="entry name" value="Ribosomal_eL24-rel_N"/>
</dbReference>
<dbReference type="InterPro" id="IPR023442">
    <property type="entry name" value="Ribosomal_eL24_CS"/>
</dbReference>
<dbReference type="InterPro" id="IPR011017">
    <property type="entry name" value="TRASH_dom"/>
</dbReference>
<dbReference type="PANTHER" id="PTHR10792">
    <property type="entry name" value="60S RIBOSOMAL PROTEIN L24"/>
    <property type="match status" value="1"/>
</dbReference>
<dbReference type="PANTHER" id="PTHR10792:SF8">
    <property type="entry name" value="RIBOSOME BIOGENESIS PROTEIN RLP24-RELATED"/>
    <property type="match status" value="1"/>
</dbReference>
<dbReference type="Pfam" id="PF01246">
    <property type="entry name" value="Ribosomal_L24e"/>
    <property type="match status" value="1"/>
</dbReference>
<dbReference type="SMART" id="SM00746">
    <property type="entry name" value="TRASH"/>
    <property type="match status" value="1"/>
</dbReference>
<dbReference type="SUPFAM" id="SSF57716">
    <property type="entry name" value="Glucocorticoid receptor-like (DNA-binding domain)"/>
    <property type="match status" value="1"/>
</dbReference>
<dbReference type="PROSITE" id="PS01073">
    <property type="entry name" value="RIBOSOMAL_L24E"/>
    <property type="match status" value="1"/>
</dbReference>
<evidence type="ECO:0000250" key="1">
    <source>
        <dbReference type="UniProtKB" id="Q07915"/>
    </source>
</evidence>
<evidence type="ECO:0000256" key="2">
    <source>
        <dbReference type="SAM" id="MobiDB-lite"/>
    </source>
</evidence>
<evidence type="ECO:0000305" key="3"/>
<accession>Q759D1</accession>
<sequence>MRIYSCHFCSSPVYPGHGIMFVRNDAKEFRFCRSKCHKAFKQRRNPRKLKWTKAFRKAAGKELAVDSTLTFAQRRNVPVRYNRELVETTLKAMTRIEEIRQKRERAFYKNRMKGNTEKDFLRDKKLVESNPELLKMREVELQRQAERAAAGVDEDAEMGDSDEEMEDASEEESEEEEQQQQKIVLKNKKRSAKKIAF</sequence>
<name>RLP24_EREGS</name>
<organism>
    <name type="scientific">Eremothecium gossypii (strain ATCC 10895 / CBS 109.51 / FGSC 9923 / NRRL Y-1056)</name>
    <name type="common">Yeast</name>
    <name type="synonym">Ashbya gossypii</name>
    <dbReference type="NCBI Taxonomy" id="284811"/>
    <lineage>
        <taxon>Eukaryota</taxon>
        <taxon>Fungi</taxon>
        <taxon>Dikarya</taxon>
        <taxon>Ascomycota</taxon>
        <taxon>Saccharomycotina</taxon>
        <taxon>Saccharomycetes</taxon>
        <taxon>Saccharomycetales</taxon>
        <taxon>Saccharomycetaceae</taxon>
        <taxon>Eremothecium</taxon>
    </lineage>
</organism>
<comment type="function">
    <text evidence="1">Involved in the biogenesis of the 60S ribosomal subunit. Ensures the docking of NOG1 to pre-60S particles. Activates and recruits ATPase AFG2 to cytoplasmic pre-60S ribosomal particles.</text>
</comment>
<comment type="subunit">
    <text evidence="1">Associated with nucleolar and cytoplasmic pre-60S particles. At the end of biogenesis it dissociates from cytoplasmic pre-60S particles and is likely to be exchanged for its ribosomal homolog, RPL24.</text>
</comment>
<comment type="subcellular location">
    <subcellularLocation>
        <location evidence="1">Cytoplasm</location>
    </subcellularLocation>
    <subcellularLocation>
        <location evidence="1">Nucleus</location>
    </subcellularLocation>
    <text evidence="1">Shuttles between the nucleus and the cytoplasm.</text>
</comment>
<comment type="similarity">
    <text evidence="3">Belongs to the eukaryotic ribosomal protein eL24 family.</text>
</comment>
<protein>
    <recommendedName>
        <fullName>Ribosome biogenesis protein RLP24</fullName>
    </recommendedName>
</protein>
<feature type="chain" id="PRO_0000136904" description="Ribosome biogenesis protein RLP24">
    <location>
        <begin position="1"/>
        <end position="197"/>
    </location>
</feature>
<feature type="region of interest" description="Disordered" evidence="2">
    <location>
        <begin position="144"/>
        <end position="197"/>
    </location>
</feature>
<feature type="compositionally biased region" description="Acidic residues" evidence="2">
    <location>
        <begin position="152"/>
        <end position="178"/>
    </location>
</feature>
<feature type="compositionally biased region" description="Basic residues" evidence="2">
    <location>
        <begin position="185"/>
        <end position="197"/>
    </location>
</feature>
<reference key="1">
    <citation type="journal article" date="2004" name="Science">
        <title>The Ashbya gossypii genome as a tool for mapping the ancient Saccharomyces cerevisiae genome.</title>
        <authorList>
            <person name="Dietrich F.S."/>
            <person name="Voegeli S."/>
            <person name="Brachat S."/>
            <person name="Lerch A."/>
            <person name="Gates K."/>
            <person name="Steiner S."/>
            <person name="Mohr C."/>
            <person name="Poehlmann R."/>
            <person name="Luedi P."/>
            <person name="Choi S."/>
            <person name="Wing R.A."/>
            <person name="Flavier A."/>
            <person name="Gaffney T.D."/>
            <person name="Philippsen P."/>
        </authorList>
    </citation>
    <scope>NUCLEOTIDE SEQUENCE [LARGE SCALE GENOMIC DNA]</scope>
    <source>
        <strain>ATCC 10895 / CBS 109.51 / FGSC 9923 / NRRL Y-1056</strain>
    </source>
</reference>
<reference key="2">
    <citation type="journal article" date="2013" name="G3 (Bethesda)">
        <title>Genomes of Ashbya fungi isolated from insects reveal four mating-type loci, numerous translocations, lack of transposons, and distinct gene duplications.</title>
        <authorList>
            <person name="Dietrich F.S."/>
            <person name="Voegeli S."/>
            <person name="Kuo S."/>
            <person name="Philippsen P."/>
        </authorList>
    </citation>
    <scope>GENOME REANNOTATION</scope>
    <source>
        <strain>ATCC 10895 / CBS 109.51 / FGSC 9923 / NRRL Y-1056</strain>
    </source>
</reference>
<proteinExistence type="inferred from homology"/>
<gene>
    <name type="primary">RLP24</name>
    <name type="ordered locus">ADR346W</name>
</gene>
<keyword id="KW-0963">Cytoplasm</keyword>
<keyword id="KW-0539">Nucleus</keyword>
<keyword id="KW-1185">Reference proteome</keyword>
<keyword id="KW-0690">Ribosome biogenesis</keyword>